<organism>
    <name type="scientific">Escherichia coli O157:H7</name>
    <dbReference type="NCBI Taxonomy" id="83334"/>
    <lineage>
        <taxon>Bacteria</taxon>
        <taxon>Pseudomonadati</taxon>
        <taxon>Pseudomonadota</taxon>
        <taxon>Gammaproteobacteria</taxon>
        <taxon>Enterobacterales</taxon>
        <taxon>Enterobacteriaceae</taxon>
        <taxon>Escherichia</taxon>
    </lineage>
</organism>
<evidence type="ECO:0000250" key="1">
    <source>
        <dbReference type="UniProtKB" id="P0AAZ4"/>
    </source>
</evidence>
<evidence type="ECO:0000305" key="2"/>
<sequence>MSNLSLDFSDNTFQPLAARMRPENLAQYIGQQHLLAAGKPLPRAIEAGHLHSMILWGPPGTGKTTLAEVIARYANADVERISAVTSGVKEIREAIERARQNRNAGRRTILFVDEVHRFNKSQQDAFLPHIEDGTITFIGATTENPSFELNSALLSRARVYLLKSLSTEDIEQVLTQAMEDKTRGYGGQDIVLPDETRRAIAELVNGDARRALNTLEMMADMAEVDDSGKRVLKPELLTEIAGERSARFDNKGDRFYDLISALHKSVRGSAPDAALYWYARIITAGGDPLYVARRCLAIASEDVGNADPRAMQVAIAAWDCFTRVGPAEGERAIAQAIVYLACAPKSNAVYTAFKAALADARERPDYDVPVHLRNAPTKLMKEMGYGQEYRYAHDEANAYAAGEVYFPPEIAQTRYYFPTNRGLEGKIGEKLAWLAEQDQNSPIKRYR</sequence>
<gene>
    <name type="primary">rarA</name>
    <name type="ordered locus">Z1238</name>
    <name type="ordered locus">ECs0977</name>
</gene>
<accession>P0AAZ6</accession>
<accession>P45526</accession>
<accession>P75833</accession>
<protein>
    <recommendedName>
        <fullName>Replication-associated recombination protein A</fullName>
    </recommendedName>
</protein>
<reference key="1">
    <citation type="journal article" date="2001" name="Nature">
        <title>Genome sequence of enterohaemorrhagic Escherichia coli O157:H7.</title>
        <authorList>
            <person name="Perna N.T."/>
            <person name="Plunkett G. III"/>
            <person name="Burland V."/>
            <person name="Mau B."/>
            <person name="Glasner J.D."/>
            <person name="Rose D.J."/>
            <person name="Mayhew G.F."/>
            <person name="Evans P.S."/>
            <person name="Gregor J."/>
            <person name="Kirkpatrick H.A."/>
            <person name="Posfai G."/>
            <person name="Hackett J."/>
            <person name="Klink S."/>
            <person name="Boutin A."/>
            <person name="Shao Y."/>
            <person name="Miller L."/>
            <person name="Grotbeck E.J."/>
            <person name="Davis N.W."/>
            <person name="Lim A."/>
            <person name="Dimalanta E.T."/>
            <person name="Potamousis K."/>
            <person name="Apodaca J."/>
            <person name="Anantharaman T.S."/>
            <person name="Lin J."/>
            <person name="Yen G."/>
            <person name="Schwartz D.C."/>
            <person name="Welch R.A."/>
            <person name="Blattner F.R."/>
        </authorList>
    </citation>
    <scope>NUCLEOTIDE SEQUENCE [LARGE SCALE GENOMIC DNA]</scope>
    <source>
        <strain>O157:H7 / EDL933 / ATCC 700927 / EHEC</strain>
    </source>
</reference>
<reference key="2">
    <citation type="journal article" date="2001" name="DNA Res.">
        <title>Complete genome sequence of enterohemorrhagic Escherichia coli O157:H7 and genomic comparison with a laboratory strain K-12.</title>
        <authorList>
            <person name="Hayashi T."/>
            <person name="Makino K."/>
            <person name="Ohnishi M."/>
            <person name="Kurokawa K."/>
            <person name="Ishii K."/>
            <person name="Yokoyama K."/>
            <person name="Han C.-G."/>
            <person name="Ohtsubo E."/>
            <person name="Nakayama K."/>
            <person name="Murata T."/>
            <person name="Tanaka M."/>
            <person name="Tobe T."/>
            <person name="Iida T."/>
            <person name="Takami H."/>
            <person name="Honda T."/>
            <person name="Sasakawa C."/>
            <person name="Ogasawara N."/>
            <person name="Yasunaga T."/>
            <person name="Kuhara S."/>
            <person name="Shiba T."/>
            <person name="Hattori M."/>
            <person name="Shinagawa H."/>
        </authorList>
    </citation>
    <scope>NUCLEOTIDE SEQUENCE [LARGE SCALE GENOMIC DNA]</scope>
    <source>
        <strain>O157:H7 / Sakai / RIMD 0509952 / EHEC</strain>
    </source>
</reference>
<name>RARA_ECO57</name>
<comment type="function">
    <text evidence="1">DNA-dependent ATPase that plays important roles in cellular responses to stalled DNA replication processes.</text>
</comment>
<comment type="similarity">
    <text evidence="2">Belongs to the AAA ATPase family. RarA/MGS1/WRNIP1 subfamily.</text>
</comment>
<dbReference type="EMBL" id="AE005174">
    <property type="protein sequence ID" value="AAG55379.1"/>
    <property type="molecule type" value="Genomic_DNA"/>
</dbReference>
<dbReference type="EMBL" id="BA000007">
    <property type="protein sequence ID" value="BAB34400.1"/>
    <property type="molecule type" value="Genomic_DNA"/>
</dbReference>
<dbReference type="PIR" id="A99751">
    <property type="entry name" value="A99751"/>
</dbReference>
<dbReference type="RefSeq" id="NP_309004.1">
    <property type="nucleotide sequence ID" value="NC_002695.1"/>
</dbReference>
<dbReference type="RefSeq" id="WP_000067755.1">
    <property type="nucleotide sequence ID" value="NZ_VOAI01000006.1"/>
</dbReference>
<dbReference type="SMR" id="P0AAZ6"/>
<dbReference type="STRING" id="155864.Z1238"/>
<dbReference type="GeneID" id="75170967"/>
<dbReference type="GeneID" id="917730"/>
<dbReference type="KEGG" id="ece:Z1238"/>
<dbReference type="KEGG" id="ecs:ECs_0977"/>
<dbReference type="PATRIC" id="fig|386585.9.peg.1094"/>
<dbReference type="eggNOG" id="COG2256">
    <property type="taxonomic scope" value="Bacteria"/>
</dbReference>
<dbReference type="HOGENOM" id="CLU_017985_0_3_6"/>
<dbReference type="OMA" id="RIILSQC"/>
<dbReference type="Proteomes" id="UP000000558">
    <property type="component" value="Chromosome"/>
</dbReference>
<dbReference type="Proteomes" id="UP000002519">
    <property type="component" value="Chromosome"/>
</dbReference>
<dbReference type="GO" id="GO:0005524">
    <property type="term" value="F:ATP binding"/>
    <property type="evidence" value="ECO:0007669"/>
    <property type="project" value="UniProtKB-KW"/>
</dbReference>
<dbReference type="GO" id="GO:0016887">
    <property type="term" value="F:ATP hydrolysis activity"/>
    <property type="evidence" value="ECO:0007669"/>
    <property type="project" value="InterPro"/>
</dbReference>
<dbReference type="GO" id="GO:0003677">
    <property type="term" value="F:DNA binding"/>
    <property type="evidence" value="ECO:0007669"/>
    <property type="project" value="InterPro"/>
</dbReference>
<dbReference type="GO" id="GO:0008047">
    <property type="term" value="F:enzyme activator activity"/>
    <property type="evidence" value="ECO:0007669"/>
    <property type="project" value="TreeGrafter"/>
</dbReference>
<dbReference type="GO" id="GO:0017116">
    <property type="term" value="F:single-stranded DNA helicase activity"/>
    <property type="evidence" value="ECO:0007669"/>
    <property type="project" value="TreeGrafter"/>
</dbReference>
<dbReference type="GO" id="GO:0000731">
    <property type="term" value="P:DNA synthesis involved in DNA repair"/>
    <property type="evidence" value="ECO:0007669"/>
    <property type="project" value="TreeGrafter"/>
</dbReference>
<dbReference type="GO" id="GO:0006261">
    <property type="term" value="P:DNA-templated DNA replication"/>
    <property type="evidence" value="ECO:0007669"/>
    <property type="project" value="TreeGrafter"/>
</dbReference>
<dbReference type="CDD" id="cd00009">
    <property type="entry name" value="AAA"/>
    <property type="match status" value="1"/>
</dbReference>
<dbReference type="CDD" id="cd18139">
    <property type="entry name" value="HLD_clamp_RarA"/>
    <property type="match status" value="1"/>
</dbReference>
<dbReference type="FunFam" id="1.20.272.10:FF:000001">
    <property type="entry name" value="Putative AAA family ATPase"/>
    <property type="match status" value="1"/>
</dbReference>
<dbReference type="FunFam" id="1.10.3710.10:FF:000001">
    <property type="entry name" value="Replication-associated recombination protein A"/>
    <property type="match status" value="1"/>
</dbReference>
<dbReference type="FunFam" id="1.10.8.60:FF:000029">
    <property type="entry name" value="Replication-associated recombination protein A"/>
    <property type="match status" value="1"/>
</dbReference>
<dbReference type="FunFam" id="3.40.50.300:FF:000137">
    <property type="entry name" value="Replication-associated recombination protein A"/>
    <property type="match status" value="1"/>
</dbReference>
<dbReference type="Gene3D" id="1.10.8.60">
    <property type="match status" value="1"/>
</dbReference>
<dbReference type="Gene3D" id="1.20.272.10">
    <property type="match status" value="1"/>
</dbReference>
<dbReference type="Gene3D" id="1.10.3710.10">
    <property type="entry name" value="DNA polymerase III clamp loader subunits, C-terminal domain"/>
    <property type="match status" value="1"/>
</dbReference>
<dbReference type="Gene3D" id="3.40.50.300">
    <property type="entry name" value="P-loop containing nucleotide triphosphate hydrolases"/>
    <property type="match status" value="1"/>
</dbReference>
<dbReference type="InterPro" id="IPR003593">
    <property type="entry name" value="AAA+_ATPase"/>
</dbReference>
<dbReference type="InterPro" id="IPR032423">
    <property type="entry name" value="AAA_assoc_2"/>
</dbReference>
<dbReference type="InterPro" id="IPR051314">
    <property type="entry name" value="AAA_ATPase_RarA/MGS1/WRNIP1"/>
</dbReference>
<dbReference type="InterPro" id="IPR003959">
    <property type="entry name" value="ATPase_AAA_core"/>
</dbReference>
<dbReference type="InterPro" id="IPR008921">
    <property type="entry name" value="DNA_pol3_clamp-load_cplx_C"/>
</dbReference>
<dbReference type="InterPro" id="IPR021886">
    <property type="entry name" value="MgsA_C"/>
</dbReference>
<dbReference type="InterPro" id="IPR027417">
    <property type="entry name" value="P-loop_NTPase"/>
</dbReference>
<dbReference type="PANTHER" id="PTHR13779:SF7">
    <property type="entry name" value="ATPASE WRNIP1"/>
    <property type="match status" value="1"/>
</dbReference>
<dbReference type="PANTHER" id="PTHR13779">
    <property type="entry name" value="WERNER HELICASE-INTERACTING PROTEIN 1 FAMILY MEMBER"/>
    <property type="match status" value="1"/>
</dbReference>
<dbReference type="Pfam" id="PF00004">
    <property type="entry name" value="AAA"/>
    <property type="match status" value="1"/>
</dbReference>
<dbReference type="Pfam" id="PF16193">
    <property type="entry name" value="AAA_assoc_2"/>
    <property type="match status" value="1"/>
</dbReference>
<dbReference type="Pfam" id="PF12002">
    <property type="entry name" value="MgsA_C"/>
    <property type="match status" value="1"/>
</dbReference>
<dbReference type="SMART" id="SM00382">
    <property type="entry name" value="AAA"/>
    <property type="match status" value="1"/>
</dbReference>
<dbReference type="SUPFAM" id="SSF52540">
    <property type="entry name" value="P-loop containing nucleoside triphosphate hydrolases"/>
    <property type="match status" value="1"/>
</dbReference>
<dbReference type="SUPFAM" id="SSF48019">
    <property type="entry name" value="post-AAA+ oligomerization domain-like"/>
    <property type="match status" value="1"/>
</dbReference>
<feature type="chain" id="PRO_0000168756" description="Replication-associated recombination protein A">
    <location>
        <begin position="1"/>
        <end position="447"/>
    </location>
</feature>
<feature type="binding site" evidence="1">
    <location>
        <begin position="57"/>
        <end position="64"/>
    </location>
    <ligand>
        <name>ATP</name>
        <dbReference type="ChEBI" id="CHEBI:30616"/>
    </ligand>
</feature>
<keyword id="KW-0067">ATP-binding</keyword>
<keyword id="KW-0235">DNA replication</keyword>
<keyword id="KW-0547">Nucleotide-binding</keyword>
<keyword id="KW-1185">Reference proteome</keyword>
<proteinExistence type="inferred from homology"/>